<gene>
    <name type="primary">LAC20</name>
    <name type="ordered locus">Os11g0641800</name>
    <name type="ordered locus">LOC_Os11g42220</name>
    <name type="ORF">OsJ_033255</name>
</gene>
<organism>
    <name type="scientific">Oryza sativa subsp. japonica</name>
    <name type="common">Rice</name>
    <dbReference type="NCBI Taxonomy" id="39947"/>
    <lineage>
        <taxon>Eukaryota</taxon>
        <taxon>Viridiplantae</taxon>
        <taxon>Streptophyta</taxon>
        <taxon>Embryophyta</taxon>
        <taxon>Tracheophyta</taxon>
        <taxon>Spermatophyta</taxon>
        <taxon>Magnoliopsida</taxon>
        <taxon>Liliopsida</taxon>
        <taxon>Poales</taxon>
        <taxon>Poaceae</taxon>
        <taxon>BOP clade</taxon>
        <taxon>Oryzoideae</taxon>
        <taxon>Oryzeae</taxon>
        <taxon>Oryzinae</taxon>
        <taxon>Oryza</taxon>
        <taxon>Oryza sativa</taxon>
    </lineage>
</organism>
<keyword id="KW-0052">Apoplast</keyword>
<keyword id="KW-0186">Copper</keyword>
<keyword id="KW-0325">Glycoprotein</keyword>
<keyword id="KW-0439">Lignin degradation</keyword>
<keyword id="KW-0479">Metal-binding</keyword>
<keyword id="KW-0560">Oxidoreductase</keyword>
<keyword id="KW-1185">Reference proteome</keyword>
<keyword id="KW-0677">Repeat</keyword>
<keyword id="KW-0964">Secreted</keyword>
<keyword id="KW-0732">Signal</keyword>
<evidence type="ECO:0000250" key="1"/>
<evidence type="ECO:0000255" key="2"/>
<evidence type="ECO:0000256" key="3">
    <source>
        <dbReference type="SAM" id="MobiDB-lite"/>
    </source>
</evidence>
<evidence type="ECO:0000305" key="4"/>
<accession>Q2R0L0</accession>
<accession>A0A0P0Y4S1</accession>
<accession>B7ECV6</accession>
<reference key="1">
    <citation type="journal article" date="2005" name="BMC Biol.">
        <title>The sequence of rice chromosomes 11 and 12, rich in disease resistance genes and recent gene duplications.</title>
        <authorList>
            <consortium name="The rice chromosomes 11 and 12 sequencing consortia"/>
        </authorList>
    </citation>
    <scope>NUCLEOTIDE SEQUENCE [LARGE SCALE GENOMIC DNA]</scope>
    <source>
        <strain>cv. Nipponbare</strain>
    </source>
</reference>
<reference key="2">
    <citation type="journal article" date="2005" name="Nature">
        <title>The map-based sequence of the rice genome.</title>
        <authorList>
            <consortium name="International rice genome sequencing project (IRGSP)"/>
        </authorList>
    </citation>
    <scope>NUCLEOTIDE SEQUENCE [LARGE SCALE GENOMIC DNA]</scope>
    <source>
        <strain>cv. Nipponbare</strain>
    </source>
</reference>
<reference key="3">
    <citation type="journal article" date="2008" name="Nucleic Acids Res.">
        <title>The rice annotation project database (RAP-DB): 2008 update.</title>
        <authorList>
            <consortium name="The rice annotation project (RAP)"/>
        </authorList>
    </citation>
    <scope>GENOME REANNOTATION</scope>
    <source>
        <strain>cv. Nipponbare</strain>
    </source>
</reference>
<reference key="4">
    <citation type="journal article" date="2013" name="Rice">
        <title>Improvement of the Oryza sativa Nipponbare reference genome using next generation sequence and optical map data.</title>
        <authorList>
            <person name="Kawahara Y."/>
            <person name="de la Bastide M."/>
            <person name="Hamilton J.P."/>
            <person name="Kanamori H."/>
            <person name="McCombie W.R."/>
            <person name="Ouyang S."/>
            <person name="Schwartz D.C."/>
            <person name="Tanaka T."/>
            <person name="Wu J."/>
            <person name="Zhou S."/>
            <person name="Childs K.L."/>
            <person name="Davidson R.M."/>
            <person name="Lin H."/>
            <person name="Quesada-Ocampo L."/>
            <person name="Vaillancourt B."/>
            <person name="Sakai H."/>
            <person name="Lee S.S."/>
            <person name="Kim J."/>
            <person name="Numa H."/>
            <person name="Itoh T."/>
            <person name="Buell C.R."/>
            <person name="Matsumoto T."/>
        </authorList>
    </citation>
    <scope>GENOME REANNOTATION</scope>
    <source>
        <strain>cv. Nipponbare</strain>
    </source>
</reference>
<reference key="5">
    <citation type="journal article" date="2005" name="PLoS Biol.">
        <title>The genomes of Oryza sativa: a history of duplications.</title>
        <authorList>
            <person name="Yu J."/>
            <person name="Wang J."/>
            <person name="Lin W."/>
            <person name="Li S."/>
            <person name="Li H."/>
            <person name="Zhou J."/>
            <person name="Ni P."/>
            <person name="Dong W."/>
            <person name="Hu S."/>
            <person name="Zeng C."/>
            <person name="Zhang J."/>
            <person name="Zhang Y."/>
            <person name="Li R."/>
            <person name="Xu Z."/>
            <person name="Li S."/>
            <person name="Li X."/>
            <person name="Zheng H."/>
            <person name="Cong L."/>
            <person name="Lin L."/>
            <person name="Yin J."/>
            <person name="Geng J."/>
            <person name="Li G."/>
            <person name="Shi J."/>
            <person name="Liu J."/>
            <person name="Lv H."/>
            <person name="Li J."/>
            <person name="Wang J."/>
            <person name="Deng Y."/>
            <person name="Ran L."/>
            <person name="Shi X."/>
            <person name="Wang X."/>
            <person name="Wu Q."/>
            <person name="Li C."/>
            <person name="Ren X."/>
            <person name="Wang J."/>
            <person name="Wang X."/>
            <person name="Li D."/>
            <person name="Liu D."/>
            <person name="Zhang X."/>
            <person name="Ji Z."/>
            <person name="Zhao W."/>
            <person name="Sun Y."/>
            <person name="Zhang Z."/>
            <person name="Bao J."/>
            <person name="Han Y."/>
            <person name="Dong L."/>
            <person name="Ji J."/>
            <person name="Chen P."/>
            <person name="Wu S."/>
            <person name="Liu J."/>
            <person name="Xiao Y."/>
            <person name="Bu D."/>
            <person name="Tan J."/>
            <person name="Yang L."/>
            <person name="Ye C."/>
            <person name="Zhang J."/>
            <person name="Xu J."/>
            <person name="Zhou Y."/>
            <person name="Yu Y."/>
            <person name="Zhang B."/>
            <person name="Zhuang S."/>
            <person name="Wei H."/>
            <person name="Liu B."/>
            <person name="Lei M."/>
            <person name="Yu H."/>
            <person name="Li Y."/>
            <person name="Xu H."/>
            <person name="Wei S."/>
            <person name="He X."/>
            <person name="Fang L."/>
            <person name="Zhang Z."/>
            <person name="Zhang Y."/>
            <person name="Huang X."/>
            <person name="Su Z."/>
            <person name="Tong W."/>
            <person name="Li J."/>
            <person name="Tong Z."/>
            <person name="Li S."/>
            <person name="Ye J."/>
            <person name="Wang L."/>
            <person name="Fang L."/>
            <person name="Lei T."/>
            <person name="Chen C.-S."/>
            <person name="Chen H.-C."/>
            <person name="Xu Z."/>
            <person name="Li H."/>
            <person name="Huang H."/>
            <person name="Zhang F."/>
            <person name="Xu H."/>
            <person name="Li N."/>
            <person name="Zhao C."/>
            <person name="Li S."/>
            <person name="Dong L."/>
            <person name="Huang Y."/>
            <person name="Li L."/>
            <person name="Xi Y."/>
            <person name="Qi Q."/>
            <person name="Li W."/>
            <person name="Zhang B."/>
            <person name="Hu W."/>
            <person name="Zhang Y."/>
            <person name="Tian X."/>
            <person name="Jiao Y."/>
            <person name="Liang X."/>
            <person name="Jin J."/>
            <person name="Gao L."/>
            <person name="Zheng W."/>
            <person name="Hao B."/>
            <person name="Liu S.-M."/>
            <person name="Wang W."/>
            <person name="Yuan L."/>
            <person name="Cao M."/>
            <person name="McDermott J."/>
            <person name="Samudrala R."/>
            <person name="Wang J."/>
            <person name="Wong G.K.-S."/>
            <person name="Yang H."/>
        </authorList>
    </citation>
    <scope>NUCLEOTIDE SEQUENCE [LARGE SCALE GENOMIC DNA]</scope>
    <source>
        <strain>cv. Nipponbare</strain>
    </source>
</reference>
<reference key="6">
    <citation type="journal article" date="2003" name="Science">
        <title>Collection, mapping, and annotation of over 28,000 cDNA clones from japonica rice.</title>
        <authorList>
            <consortium name="The rice full-length cDNA consortium"/>
        </authorList>
    </citation>
    <scope>NUCLEOTIDE SEQUENCE [LARGE SCALE MRNA]</scope>
    <source>
        <strain>cv. Nipponbare</strain>
    </source>
</reference>
<proteinExistence type="evidence at transcript level"/>
<name>LAC20_ORYSJ</name>
<protein>
    <recommendedName>
        <fullName>Laccase-20</fullName>
        <ecNumber>1.10.3.2</ecNumber>
    </recommendedName>
    <alternativeName>
        <fullName>Benzenediol:oxygen oxidoreductase 20</fullName>
    </alternativeName>
    <alternativeName>
        <fullName>Diphenol oxidase 20</fullName>
    </alternativeName>
    <alternativeName>
        <fullName>Urishiol oxidase 20</fullName>
    </alternativeName>
</protein>
<sequence>MVASLLCTVAVAVLAVAAVGGEAGVVEHTFVVHEMNVTHLCNTTKIFVVNGQLPGPTVDVTEGDTVVIHVVNKIPHGLTIHWHGVRQLRSCWADGAGFITECPIPPGSERTYRFNVTDQVGTLWWHAHVTCLRSTINGAFIIRPRDGKYPFPTPVKDVPIIIGEWWELDLVELDRRMRDGNFDDNPLSATINGKLGDLSNCSGIVEESFVLNVKHGESYLLRVINTAFFSEYYFKVAGHTFTVVGADGNYLTPFKTDMVTVAPGEAIDVLMVADAPPAHYHMIALANQPPEPDPQIPKYISRGLVRYTGVDANNNGLPVPMPIMPNQHNTMPSYYFHANLTGLMHPKHRRVPMHVDERIFIILGLGTICRGRNTTCKRQRSLETIEVATMNNVSFTHPNTTALLERYYDGTPEGVYTEDFPVRPPRPYNYTNPALIPPGPLEEVLEPTFKATKLKRFKYNTSVEIIFQSSTLLMSDSNPMHLHGYDVFLLAQGLGSFNAKRDIRKFNYHNPQLRNTILVPRGGWAAVRFITDNPGMWYLHCHFEFHIIMGMATAFIVEDGPTPETSLPPPPPEFKRCDAS</sequence>
<dbReference type="EC" id="1.10.3.2"/>
<dbReference type="EMBL" id="DP000010">
    <property type="protein sequence ID" value="ABA95019.1"/>
    <property type="molecule type" value="Genomic_DNA"/>
</dbReference>
<dbReference type="EMBL" id="AP008217">
    <property type="protein sequence ID" value="BAF28717.2"/>
    <property type="status" value="ALT_INIT"/>
    <property type="molecule type" value="Genomic_DNA"/>
</dbReference>
<dbReference type="EMBL" id="AP014967">
    <property type="protein sequence ID" value="BAT15014.1"/>
    <property type="molecule type" value="Genomic_DNA"/>
</dbReference>
<dbReference type="EMBL" id="CM000148">
    <property type="protein sequence ID" value="EAZ19046.1"/>
    <property type="molecule type" value="Genomic_DNA"/>
</dbReference>
<dbReference type="EMBL" id="AK066963">
    <property type="protein sequence ID" value="BAG90203.1"/>
    <property type="molecule type" value="mRNA"/>
</dbReference>
<dbReference type="RefSeq" id="XP_015616735.1">
    <property type="nucleotide sequence ID" value="XM_015761249.1"/>
</dbReference>
<dbReference type="SMR" id="Q2R0L0"/>
<dbReference type="STRING" id="39947.Q2R0L0"/>
<dbReference type="GlyCosmos" id="Q2R0L0">
    <property type="glycosylation" value="10 sites, No reported glycans"/>
</dbReference>
<dbReference type="PaxDb" id="39947-Q2R0L0"/>
<dbReference type="EnsemblPlants" id="Os11t0641800-01">
    <property type="protein sequence ID" value="Os11t0641800-01"/>
    <property type="gene ID" value="Os11g0641800"/>
</dbReference>
<dbReference type="Gramene" id="Os11t0641800-01">
    <property type="protein sequence ID" value="Os11t0641800-01"/>
    <property type="gene ID" value="Os11g0641800"/>
</dbReference>
<dbReference type="KEGG" id="dosa:Os11g0641800"/>
<dbReference type="eggNOG" id="KOG1263">
    <property type="taxonomic scope" value="Eukaryota"/>
</dbReference>
<dbReference type="HOGENOM" id="CLU_006504_6_3_1"/>
<dbReference type="InParanoid" id="Q2R0L0"/>
<dbReference type="OMA" id="IWYLHCH"/>
<dbReference type="OrthoDB" id="2121828at2759"/>
<dbReference type="Proteomes" id="UP000000763">
    <property type="component" value="Chromosome 11"/>
</dbReference>
<dbReference type="Proteomes" id="UP000007752">
    <property type="component" value="Chromosome 11"/>
</dbReference>
<dbReference type="Proteomes" id="UP000059680">
    <property type="component" value="Chromosome 11"/>
</dbReference>
<dbReference type="GO" id="GO:0048046">
    <property type="term" value="C:apoplast"/>
    <property type="evidence" value="ECO:0007669"/>
    <property type="project" value="UniProtKB-SubCell"/>
</dbReference>
<dbReference type="GO" id="GO:0005507">
    <property type="term" value="F:copper ion binding"/>
    <property type="evidence" value="ECO:0007669"/>
    <property type="project" value="InterPro"/>
</dbReference>
<dbReference type="GO" id="GO:0052716">
    <property type="term" value="F:hydroquinone:oxygen oxidoreductase activity"/>
    <property type="evidence" value="ECO:0007669"/>
    <property type="project" value="UniProtKB-EC"/>
</dbReference>
<dbReference type="GO" id="GO:0016491">
    <property type="term" value="F:oxidoreductase activity"/>
    <property type="evidence" value="ECO:0000318"/>
    <property type="project" value="GO_Central"/>
</dbReference>
<dbReference type="GO" id="GO:0046274">
    <property type="term" value="P:lignin catabolic process"/>
    <property type="evidence" value="ECO:0007669"/>
    <property type="project" value="UniProtKB-KW"/>
</dbReference>
<dbReference type="CDD" id="cd13849">
    <property type="entry name" value="CuRO_1_LCC_plant"/>
    <property type="match status" value="1"/>
</dbReference>
<dbReference type="CDD" id="cd13875">
    <property type="entry name" value="CuRO_2_LCC_plant"/>
    <property type="match status" value="1"/>
</dbReference>
<dbReference type="CDD" id="cd13897">
    <property type="entry name" value="CuRO_3_LCC_plant"/>
    <property type="match status" value="1"/>
</dbReference>
<dbReference type="Gene3D" id="2.60.40.420">
    <property type="entry name" value="Cupredoxins - blue copper proteins"/>
    <property type="match status" value="3"/>
</dbReference>
<dbReference type="InterPro" id="IPR011707">
    <property type="entry name" value="Cu-oxidase-like_N"/>
</dbReference>
<dbReference type="InterPro" id="IPR001117">
    <property type="entry name" value="Cu-oxidase_2nd"/>
</dbReference>
<dbReference type="InterPro" id="IPR011706">
    <property type="entry name" value="Cu-oxidase_C"/>
</dbReference>
<dbReference type="InterPro" id="IPR045087">
    <property type="entry name" value="Cu-oxidase_fam"/>
</dbReference>
<dbReference type="InterPro" id="IPR033138">
    <property type="entry name" value="Cu_oxidase_CS"/>
</dbReference>
<dbReference type="InterPro" id="IPR002355">
    <property type="entry name" value="Cu_oxidase_Cu_BS"/>
</dbReference>
<dbReference type="InterPro" id="IPR008972">
    <property type="entry name" value="Cupredoxin"/>
</dbReference>
<dbReference type="InterPro" id="IPR034288">
    <property type="entry name" value="CuRO_1_LCC"/>
</dbReference>
<dbReference type="InterPro" id="IPR034285">
    <property type="entry name" value="CuRO_2_LCC"/>
</dbReference>
<dbReference type="InterPro" id="IPR034289">
    <property type="entry name" value="CuRO_3_LCC"/>
</dbReference>
<dbReference type="PANTHER" id="PTHR11709:SF86">
    <property type="entry name" value="LACCASE-18"/>
    <property type="match status" value="1"/>
</dbReference>
<dbReference type="PANTHER" id="PTHR11709">
    <property type="entry name" value="MULTI-COPPER OXIDASE"/>
    <property type="match status" value="1"/>
</dbReference>
<dbReference type="Pfam" id="PF00394">
    <property type="entry name" value="Cu-oxidase"/>
    <property type="match status" value="1"/>
</dbReference>
<dbReference type="Pfam" id="PF07731">
    <property type="entry name" value="Cu-oxidase_2"/>
    <property type="match status" value="1"/>
</dbReference>
<dbReference type="Pfam" id="PF07732">
    <property type="entry name" value="Cu-oxidase_3"/>
    <property type="match status" value="1"/>
</dbReference>
<dbReference type="SUPFAM" id="SSF49503">
    <property type="entry name" value="Cupredoxins"/>
    <property type="match status" value="3"/>
</dbReference>
<dbReference type="PROSITE" id="PS00079">
    <property type="entry name" value="MULTICOPPER_OXIDASE1"/>
    <property type="match status" value="1"/>
</dbReference>
<dbReference type="PROSITE" id="PS00080">
    <property type="entry name" value="MULTICOPPER_OXIDASE2"/>
    <property type="match status" value="1"/>
</dbReference>
<feature type="signal peptide" evidence="2">
    <location>
        <begin position="1"/>
        <end position="23"/>
    </location>
</feature>
<feature type="chain" id="PRO_0000291907" description="Laccase-20">
    <location>
        <begin position="24"/>
        <end position="580"/>
    </location>
</feature>
<feature type="domain" description="Plastocyanin-like 1">
    <location>
        <begin position="31"/>
        <end position="147"/>
    </location>
</feature>
<feature type="domain" description="Plastocyanin-like 2">
    <location>
        <begin position="156"/>
        <end position="310"/>
    </location>
</feature>
<feature type="domain" description="Plastocyanin-like 3">
    <location>
        <begin position="419"/>
        <end position="561"/>
    </location>
</feature>
<feature type="region of interest" description="Disordered" evidence="3">
    <location>
        <begin position="560"/>
        <end position="580"/>
    </location>
</feature>
<feature type="binding site" evidence="1">
    <location>
        <position position="81"/>
    </location>
    <ligand>
        <name>Cu cation</name>
        <dbReference type="ChEBI" id="CHEBI:23378"/>
        <label>1</label>
    </ligand>
</feature>
<feature type="binding site" evidence="1">
    <location>
        <position position="83"/>
    </location>
    <ligand>
        <name>Cu cation</name>
        <dbReference type="ChEBI" id="CHEBI:23378"/>
        <label>2</label>
    </ligand>
</feature>
<feature type="binding site" evidence="1">
    <location>
        <position position="126"/>
    </location>
    <ligand>
        <name>Cu cation</name>
        <dbReference type="ChEBI" id="CHEBI:23378"/>
        <label>2</label>
    </ligand>
</feature>
<feature type="binding site" evidence="1">
    <location>
        <position position="128"/>
    </location>
    <ligand>
        <name>Cu cation</name>
        <dbReference type="ChEBI" id="CHEBI:23378"/>
        <label>3</label>
    </ligand>
</feature>
<feature type="binding site" evidence="2">
    <location>
        <position position="478"/>
    </location>
    <ligand>
        <name>Cu cation</name>
        <dbReference type="ChEBI" id="CHEBI:23378"/>
        <label>4</label>
    </ligand>
</feature>
<feature type="binding site" evidence="1">
    <location>
        <position position="481"/>
    </location>
    <ligand>
        <name>Cu cation</name>
        <dbReference type="ChEBI" id="CHEBI:23378"/>
        <label>1</label>
    </ligand>
</feature>
<feature type="binding site" evidence="1">
    <location>
        <position position="483"/>
    </location>
    <ligand>
        <name>Cu cation</name>
        <dbReference type="ChEBI" id="CHEBI:23378"/>
        <label>3</label>
    </ligand>
</feature>
<feature type="binding site" evidence="1">
    <location>
        <position position="540"/>
    </location>
    <ligand>
        <name>Cu cation</name>
        <dbReference type="ChEBI" id="CHEBI:23378"/>
        <label>3</label>
    </ligand>
</feature>
<feature type="binding site" evidence="2">
    <location>
        <position position="541"/>
    </location>
    <ligand>
        <name>Cu cation</name>
        <dbReference type="ChEBI" id="CHEBI:23378"/>
        <label>4</label>
    </ligand>
</feature>
<feature type="binding site" evidence="1">
    <location>
        <position position="542"/>
    </location>
    <ligand>
        <name>Cu cation</name>
        <dbReference type="ChEBI" id="CHEBI:23378"/>
        <label>2</label>
    </ligand>
</feature>
<feature type="binding site" evidence="2">
    <location>
        <position position="546"/>
    </location>
    <ligand>
        <name>Cu cation</name>
        <dbReference type="ChEBI" id="CHEBI:23378"/>
        <label>4</label>
    </ligand>
</feature>
<feature type="binding site" evidence="2">
    <location>
        <position position="551"/>
    </location>
    <ligand>
        <name>Cu cation</name>
        <dbReference type="ChEBI" id="CHEBI:23378"/>
        <label>4</label>
    </ligand>
</feature>
<feature type="glycosylation site" description="N-linked (GlcNAc...) asparagine" evidence="2">
    <location>
        <position position="36"/>
    </location>
</feature>
<feature type="glycosylation site" description="N-linked (GlcNAc...) asparagine" evidence="2">
    <location>
        <position position="42"/>
    </location>
</feature>
<feature type="glycosylation site" description="N-linked (GlcNAc...) asparagine" evidence="2">
    <location>
        <position position="115"/>
    </location>
</feature>
<feature type="glycosylation site" description="N-linked (GlcNAc...) asparagine" evidence="2">
    <location>
        <position position="200"/>
    </location>
</feature>
<feature type="glycosylation site" description="N-linked (GlcNAc...) asparagine" evidence="2">
    <location>
        <position position="339"/>
    </location>
</feature>
<feature type="glycosylation site" description="N-linked (GlcNAc...) asparagine" evidence="2">
    <location>
        <position position="373"/>
    </location>
</feature>
<feature type="glycosylation site" description="N-linked (GlcNAc...) asparagine" evidence="2">
    <location>
        <position position="392"/>
    </location>
</feature>
<feature type="glycosylation site" description="N-linked (GlcNAc...) asparagine" evidence="2">
    <location>
        <position position="399"/>
    </location>
</feature>
<feature type="glycosylation site" description="N-linked (GlcNAc...) asparagine" evidence="2">
    <location>
        <position position="429"/>
    </location>
</feature>
<feature type="glycosylation site" description="N-linked (GlcNAc...) asparagine" evidence="2">
    <location>
        <position position="460"/>
    </location>
</feature>
<comment type="function">
    <text evidence="1">Lignin degradation and detoxification of lignin-derived products.</text>
</comment>
<comment type="catalytic activity">
    <reaction>
        <text>4 hydroquinone + O2 = 4 benzosemiquinone + 2 H2O</text>
        <dbReference type="Rhea" id="RHEA:11276"/>
        <dbReference type="ChEBI" id="CHEBI:15377"/>
        <dbReference type="ChEBI" id="CHEBI:15379"/>
        <dbReference type="ChEBI" id="CHEBI:17594"/>
        <dbReference type="ChEBI" id="CHEBI:17977"/>
        <dbReference type="EC" id="1.10.3.2"/>
    </reaction>
</comment>
<comment type="cofactor">
    <cofactor evidence="1">
        <name>Cu cation</name>
        <dbReference type="ChEBI" id="CHEBI:23378"/>
    </cofactor>
    <text evidence="1">Binds 4 Cu cations per monomer.</text>
</comment>
<comment type="subcellular location">
    <subcellularLocation>
        <location evidence="4">Secreted</location>
        <location evidence="4">Extracellular space</location>
        <location evidence="4">Apoplast</location>
    </subcellularLocation>
</comment>
<comment type="similarity">
    <text evidence="4">Belongs to the multicopper oxidase family.</text>
</comment>
<comment type="sequence caution" evidence="4">
    <conflict type="erroneous initiation">
        <sequence resource="EMBL-CDS" id="BAF28717"/>
    </conflict>
    <text>Extended N-terminus.</text>
</comment>